<feature type="chain" id="PRO_0000178644" description="Methylglyoxal synthase">
    <location>
        <begin position="1"/>
        <end position="152"/>
    </location>
</feature>
<feature type="domain" description="MGS-like" evidence="1">
    <location>
        <begin position="6"/>
        <end position="152"/>
    </location>
</feature>
<feature type="active site" description="Proton donor/acceptor" evidence="1">
    <location>
        <position position="71"/>
    </location>
</feature>
<feature type="binding site" evidence="1">
    <location>
        <position position="19"/>
    </location>
    <ligand>
        <name>substrate</name>
    </ligand>
</feature>
<feature type="binding site" evidence="1">
    <location>
        <position position="23"/>
    </location>
    <ligand>
        <name>substrate</name>
    </ligand>
</feature>
<feature type="binding site" evidence="1">
    <location>
        <begin position="45"/>
        <end position="48"/>
    </location>
    <ligand>
        <name>substrate</name>
    </ligand>
</feature>
<feature type="binding site" evidence="1">
    <location>
        <begin position="65"/>
        <end position="66"/>
    </location>
    <ligand>
        <name>substrate</name>
    </ligand>
</feature>
<feature type="binding site" evidence="1">
    <location>
        <position position="98"/>
    </location>
    <ligand>
        <name>substrate</name>
    </ligand>
</feature>
<accession>P65351</accession>
<accession>Q8XER5</accession>
<proteinExistence type="inferred from homology"/>
<evidence type="ECO:0000255" key="1">
    <source>
        <dbReference type="HAMAP-Rule" id="MF_00549"/>
    </source>
</evidence>
<reference key="1">
    <citation type="journal article" date="2001" name="Nature">
        <title>Complete genome sequence of a multiple drug resistant Salmonella enterica serovar Typhi CT18.</title>
        <authorList>
            <person name="Parkhill J."/>
            <person name="Dougan G."/>
            <person name="James K.D."/>
            <person name="Thomson N.R."/>
            <person name="Pickard D."/>
            <person name="Wain J."/>
            <person name="Churcher C.M."/>
            <person name="Mungall K.L."/>
            <person name="Bentley S.D."/>
            <person name="Holden M.T.G."/>
            <person name="Sebaihia M."/>
            <person name="Baker S."/>
            <person name="Basham D."/>
            <person name="Brooks K."/>
            <person name="Chillingworth T."/>
            <person name="Connerton P."/>
            <person name="Cronin A."/>
            <person name="Davis P."/>
            <person name="Davies R.M."/>
            <person name="Dowd L."/>
            <person name="White N."/>
            <person name="Farrar J."/>
            <person name="Feltwell T."/>
            <person name="Hamlin N."/>
            <person name="Haque A."/>
            <person name="Hien T.T."/>
            <person name="Holroyd S."/>
            <person name="Jagels K."/>
            <person name="Krogh A."/>
            <person name="Larsen T.S."/>
            <person name="Leather S."/>
            <person name="Moule S."/>
            <person name="O'Gaora P."/>
            <person name="Parry C."/>
            <person name="Quail M.A."/>
            <person name="Rutherford K.M."/>
            <person name="Simmonds M."/>
            <person name="Skelton J."/>
            <person name="Stevens K."/>
            <person name="Whitehead S."/>
            <person name="Barrell B.G."/>
        </authorList>
    </citation>
    <scope>NUCLEOTIDE SEQUENCE [LARGE SCALE GENOMIC DNA]</scope>
    <source>
        <strain>CT18</strain>
    </source>
</reference>
<reference key="2">
    <citation type="journal article" date="2003" name="J. Bacteriol.">
        <title>Comparative genomics of Salmonella enterica serovar Typhi strains Ty2 and CT18.</title>
        <authorList>
            <person name="Deng W."/>
            <person name="Liou S.-R."/>
            <person name="Plunkett G. III"/>
            <person name="Mayhew G.F."/>
            <person name="Rose D.J."/>
            <person name="Burland V."/>
            <person name="Kodoyianni V."/>
            <person name="Schwartz D.C."/>
            <person name="Blattner F.R."/>
        </authorList>
    </citation>
    <scope>NUCLEOTIDE SEQUENCE [LARGE SCALE GENOMIC DNA]</scope>
    <source>
        <strain>ATCC 700931 / Ty2</strain>
    </source>
</reference>
<keyword id="KW-0456">Lyase</keyword>
<name>MGSA_SALTI</name>
<sequence length="152" mass="16991">MELTTRTLPTRKHIALVAHDHCKQMLMNWVERHQPLLEKHVLYATGTTGNLIQRATGMDVNAMLSGPMGGDQQVGALISEGKIDVLIFFWDPLNAVPHDPDVKALLRLATVWNIPVATNVSTADFIIQSPHFNDAVDILIPDYARYLAERLK</sequence>
<protein>
    <recommendedName>
        <fullName evidence="1">Methylglyoxal synthase</fullName>
        <shortName evidence="1">MGS</shortName>
        <ecNumber evidence="1">4.2.3.3</ecNumber>
    </recommendedName>
</protein>
<dbReference type="EC" id="4.2.3.3" evidence="1"/>
<dbReference type="EMBL" id="AL513382">
    <property type="protein sequence ID" value="CAD08202.1"/>
    <property type="molecule type" value="Genomic_DNA"/>
</dbReference>
<dbReference type="EMBL" id="AE014613">
    <property type="protein sequence ID" value="AAO69462.1"/>
    <property type="molecule type" value="Genomic_DNA"/>
</dbReference>
<dbReference type="RefSeq" id="NP_455574.1">
    <property type="nucleotide sequence ID" value="NC_003198.1"/>
</dbReference>
<dbReference type="RefSeq" id="WP_000424187.1">
    <property type="nucleotide sequence ID" value="NZ_WSUR01000013.1"/>
</dbReference>
<dbReference type="SMR" id="P65351"/>
<dbReference type="STRING" id="220341.gene:17585080"/>
<dbReference type="KEGG" id="stt:t1844"/>
<dbReference type="KEGG" id="sty:STY1098"/>
<dbReference type="PATRIC" id="fig|220341.7.peg.1105"/>
<dbReference type="eggNOG" id="COG1803">
    <property type="taxonomic scope" value="Bacteria"/>
</dbReference>
<dbReference type="HOGENOM" id="CLU_120420_0_1_6"/>
<dbReference type="OMA" id="RICDVHN"/>
<dbReference type="OrthoDB" id="9787147at2"/>
<dbReference type="Proteomes" id="UP000000541">
    <property type="component" value="Chromosome"/>
</dbReference>
<dbReference type="Proteomes" id="UP000002670">
    <property type="component" value="Chromosome"/>
</dbReference>
<dbReference type="GO" id="GO:0005829">
    <property type="term" value="C:cytosol"/>
    <property type="evidence" value="ECO:0007669"/>
    <property type="project" value="TreeGrafter"/>
</dbReference>
<dbReference type="GO" id="GO:0008929">
    <property type="term" value="F:methylglyoxal synthase activity"/>
    <property type="evidence" value="ECO:0007669"/>
    <property type="project" value="UniProtKB-UniRule"/>
</dbReference>
<dbReference type="GO" id="GO:0019242">
    <property type="term" value="P:methylglyoxal biosynthetic process"/>
    <property type="evidence" value="ECO:0007669"/>
    <property type="project" value="UniProtKB-UniRule"/>
</dbReference>
<dbReference type="CDD" id="cd01422">
    <property type="entry name" value="MGS"/>
    <property type="match status" value="1"/>
</dbReference>
<dbReference type="FunFam" id="3.40.50.1380:FF:000002">
    <property type="entry name" value="Methylglyoxal synthase"/>
    <property type="match status" value="1"/>
</dbReference>
<dbReference type="Gene3D" id="3.40.50.1380">
    <property type="entry name" value="Methylglyoxal synthase-like domain"/>
    <property type="match status" value="1"/>
</dbReference>
<dbReference type="HAMAP" id="MF_00549">
    <property type="entry name" value="Methylglyoxal_synth"/>
    <property type="match status" value="1"/>
</dbReference>
<dbReference type="InterPro" id="IPR004363">
    <property type="entry name" value="Methylgl_synth"/>
</dbReference>
<dbReference type="InterPro" id="IPR018148">
    <property type="entry name" value="Methylglyoxal_synth_AS"/>
</dbReference>
<dbReference type="InterPro" id="IPR011607">
    <property type="entry name" value="MGS-like_dom"/>
</dbReference>
<dbReference type="InterPro" id="IPR036914">
    <property type="entry name" value="MGS-like_dom_sf"/>
</dbReference>
<dbReference type="NCBIfam" id="TIGR00160">
    <property type="entry name" value="MGSA"/>
    <property type="match status" value="1"/>
</dbReference>
<dbReference type="NCBIfam" id="NF003559">
    <property type="entry name" value="PRK05234.1"/>
    <property type="match status" value="1"/>
</dbReference>
<dbReference type="PANTHER" id="PTHR30492">
    <property type="entry name" value="METHYLGLYOXAL SYNTHASE"/>
    <property type="match status" value="1"/>
</dbReference>
<dbReference type="PANTHER" id="PTHR30492:SF0">
    <property type="entry name" value="METHYLGLYOXAL SYNTHASE"/>
    <property type="match status" value="1"/>
</dbReference>
<dbReference type="Pfam" id="PF02142">
    <property type="entry name" value="MGS"/>
    <property type="match status" value="1"/>
</dbReference>
<dbReference type="PIRSF" id="PIRSF006614">
    <property type="entry name" value="Methylglyox_syn"/>
    <property type="match status" value="1"/>
</dbReference>
<dbReference type="SMART" id="SM00851">
    <property type="entry name" value="MGS"/>
    <property type="match status" value="1"/>
</dbReference>
<dbReference type="SUPFAM" id="SSF52335">
    <property type="entry name" value="Methylglyoxal synthase-like"/>
    <property type="match status" value="1"/>
</dbReference>
<dbReference type="PROSITE" id="PS01335">
    <property type="entry name" value="METHYLGLYOXAL_SYNTH"/>
    <property type="match status" value="1"/>
</dbReference>
<dbReference type="PROSITE" id="PS51855">
    <property type="entry name" value="MGS"/>
    <property type="match status" value="1"/>
</dbReference>
<organism>
    <name type="scientific">Salmonella typhi</name>
    <dbReference type="NCBI Taxonomy" id="90370"/>
    <lineage>
        <taxon>Bacteria</taxon>
        <taxon>Pseudomonadati</taxon>
        <taxon>Pseudomonadota</taxon>
        <taxon>Gammaproteobacteria</taxon>
        <taxon>Enterobacterales</taxon>
        <taxon>Enterobacteriaceae</taxon>
        <taxon>Salmonella</taxon>
    </lineage>
</organism>
<comment type="function">
    <text evidence="1">Catalyzes the formation of methylglyoxal from dihydroxyacetone phosphate.</text>
</comment>
<comment type="catalytic activity">
    <reaction evidence="1">
        <text>dihydroxyacetone phosphate = methylglyoxal + phosphate</text>
        <dbReference type="Rhea" id="RHEA:17937"/>
        <dbReference type="ChEBI" id="CHEBI:17158"/>
        <dbReference type="ChEBI" id="CHEBI:43474"/>
        <dbReference type="ChEBI" id="CHEBI:57642"/>
        <dbReference type="EC" id="4.2.3.3"/>
    </reaction>
</comment>
<comment type="similarity">
    <text evidence="1">Belongs to the methylglyoxal synthase family.</text>
</comment>
<gene>
    <name evidence="1" type="primary">mgsA</name>
    <name type="ordered locus">STY1098</name>
    <name type="ordered locus">t1844</name>
</gene>